<reference key="1">
    <citation type="journal article" date="2006" name="BMC Genomics">
        <title>Complete genome sequence of Shigella flexneri 5b and comparison with Shigella flexneri 2a.</title>
        <authorList>
            <person name="Nie H."/>
            <person name="Yang F."/>
            <person name="Zhang X."/>
            <person name="Yang J."/>
            <person name="Chen L."/>
            <person name="Wang J."/>
            <person name="Xiong Z."/>
            <person name="Peng J."/>
            <person name="Sun L."/>
            <person name="Dong J."/>
            <person name="Xue Y."/>
            <person name="Xu X."/>
            <person name="Chen S."/>
            <person name="Yao Z."/>
            <person name="Shen Y."/>
            <person name="Jin Q."/>
        </authorList>
    </citation>
    <scope>NUCLEOTIDE SEQUENCE [LARGE SCALE GENOMIC DNA]</scope>
    <source>
        <strain>8401</strain>
    </source>
</reference>
<name>AROA_SHIF8</name>
<organism>
    <name type="scientific">Shigella flexneri serotype 5b (strain 8401)</name>
    <dbReference type="NCBI Taxonomy" id="373384"/>
    <lineage>
        <taxon>Bacteria</taxon>
        <taxon>Pseudomonadati</taxon>
        <taxon>Pseudomonadota</taxon>
        <taxon>Gammaproteobacteria</taxon>
        <taxon>Enterobacterales</taxon>
        <taxon>Enterobacteriaceae</taxon>
        <taxon>Shigella</taxon>
    </lineage>
</organism>
<evidence type="ECO:0000255" key="1">
    <source>
        <dbReference type="HAMAP-Rule" id="MF_00210"/>
    </source>
</evidence>
<protein>
    <recommendedName>
        <fullName evidence="1">3-phosphoshikimate 1-carboxyvinyltransferase</fullName>
        <ecNumber evidence="1">2.5.1.19</ecNumber>
    </recommendedName>
    <alternativeName>
        <fullName evidence="1">5-enolpyruvylshikimate-3-phosphate synthase</fullName>
        <shortName evidence="1">EPSP synthase</shortName>
        <shortName evidence="1">EPSPS</shortName>
    </alternativeName>
</protein>
<keyword id="KW-0028">Amino-acid biosynthesis</keyword>
<keyword id="KW-0057">Aromatic amino acid biosynthesis</keyword>
<keyword id="KW-0963">Cytoplasm</keyword>
<keyword id="KW-0808">Transferase</keyword>
<proteinExistence type="inferred from homology"/>
<gene>
    <name evidence="1" type="primary">aroA</name>
    <name type="ordered locus">SFV_0908</name>
</gene>
<feature type="chain" id="PRO_1000012480" description="3-phosphoshikimate 1-carboxyvinyltransferase">
    <location>
        <begin position="1"/>
        <end position="427"/>
    </location>
</feature>
<feature type="active site" description="Proton acceptor" evidence="1">
    <location>
        <position position="313"/>
    </location>
</feature>
<feature type="binding site" evidence="1">
    <location>
        <position position="22"/>
    </location>
    <ligand>
        <name>3-phosphoshikimate</name>
        <dbReference type="ChEBI" id="CHEBI:145989"/>
    </ligand>
</feature>
<feature type="binding site" evidence="1">
    <location>
        <position position="22"/>
    </location>
    <ligand>
        <name>phosphoenolpyruvate</name>
        <dbReference type="ChEBI" id="CHEBI:58702"/>
    </ligand>
</feature>
<feature type="binding site" evidence="1">
    <location>
        <position position="23"/>
    </location>
    <ligand>
        <name>3-phosphoshikimate</name>
        <dbReference type="ChEBI" id="CHEBI:145989"/>
    </ligand>
</feature>
<feature type="binding site" evidence="1">
    <location>
        <position position="27"/>
    </location>
    <ligand>
        <name>3-phosphoshikimate</name>
        <dbReference type="ChEBI" id="CHEBI:145989"/>
    </ligand>
</feature>
<feature type="binding site" evidence="1">
    <location>
        <position position="96"/>
    </location>
    <ligand>
        <name>phosphoenolpyruvate</name>
        <dbReference type="ChEBI" id="CHEBI:58702"/>
    </ligand>
</feature>
<feature type="binding site" evidence="1">
    <location>
        <position position="124"/>
    </location>
    <ligand>
        <name>phosphoenolpyruvate</name>
        <dbReference type="ChEBI" id="CHEBI:58702"/>
    </ligand>
</feature>
<feature type="binding site" evidence="1">
    <location>
        <position position="169"/>
    </location>
    <ligand>
        <name>3-phosphoshikimate</name>
        <dbReference type="ChEBI" id="CHEBI:145989"/>
    </ligand>
</feature>
<feature type="binding site" evidence="1">
    <location>
        <position position="170"/>
    </location>
    <ligand>
        <name>3-phosphoshikimate</name>
        <dbReference type="ChEBI" id="CHEBI:145989"/>
    </ligand>
</feature>
<feature type="binding site" evidence="1">
    <location>
        <position position="171"/>
    </location>
    <ligand>
        <name>3-phosphoshikimate</name>
        <dbReference type="ChEBI" id="CHEBI:145989"/>
    </ligand>
</feature>
<feature type="binding site" evidence="1">
    <location>
        <position position="171"/>
    </location>
    <ligand>
        <name>phosphoenolpyruvate</name>
        <dbReference type="ChEBI" id="CHEBI:58702"/>
    </ligand>
</feature>
<feature type="binding site" evidence="1">
    <location>
        <position position="197"/>
    </location>
    <ligand>
        <name>3-phosphoshikimate</name>
        <dbReference type="ChEBI" id="CHEBI:145989"/>
    </ligand>
</feature>
<feature type="binding site" evidence="1">
    <location>
        <position position="313"/>
    </location>
    <ligand>
        <name>3-phosphoshikimate</name>
        <dbReference type="ChEBI" id="CHEBI:145989"/>
    </ligand>
</feature>
<feature type="binding site" evidence="1">
    <location>
        <position position="336"/>
    </location>
    <ligand>
        <name>3-phosphoshikimate</name>
        <dbReference type="ChEBI" id="CHEBI:145989"/>
    </ligand>
</feature>
<feature type="binding site" evidence="1">
    <location>
        <position position="340"/>
    </location>
    <ligand>
        <name>3-phosphoshikimate</name>
        <dbReference type="ChEBI" id="CHEBI:145989"/>
    </ligand>
</feature>
<feature type="binding site" evidence="1">
    <location>
        <position position="344"/>
    </location>
    <ligand>
        <name>phosphoenolpyruvate</name>
        <dbReference type="ChEBI" id="CHEBI:58702"/>
    </ligand>
</feature>
<feature type="binding site" evidence="1">
    <location>
        <position position="386"/>
    </location>
    <ligand>
        <name>phosphoenolpyruvate</name>
        <dbReference type="ChEBI" id="CHEBI:58702"/>
    </ligand>
</feature>
<feature type="binding site" evidence="1">
    <location>
        <position position="411"/>
    </location>
    <ligand>
        <name>phosphoenolpyruvate</name>
        <dbReference type="ChEBI" id="CHEBI:58702"/>
    </ligand>
</feature>
<accession>Q0SX08</accession>
<sequence length="427" mass="46168">MESLTLQPIARVDGTINLPGSKSVSNRALLLAALAHGKTVLTNLLDSDDVRHMLNALTALGLSYTLSADRTRCEIIGNGGPLHAEGALELFLGNAGTAMRPLAAALCLDSNDIVLTGEPRMKERPIGHLVDALRLGGAKITYLEQENYPPLRLQGGFTGGNVDVDGSVSSQFLTALLMTAPLAPEDTVIRIKGDLVSKPYIDITLNLMKTFGVEIENQHYQQFVVKGGQSYQSPGTYLVEGDASSASYFLAAAAIKGGTVKVTGIGRNSMQGDIRFADVLEKMGATICWGDDYISCTRGELNAIDMDMNHIPDAAMTIATAALFAKGTTTLRNIYNWRVKETDRLFAMATELRKVGAEVEEGHDYIRITPPEKLNFAEIATYNDHRMAMCFSLVALSDTPVTILDPKCTAKTFPDYFEQLARISQAA</sequence>
<comment type="function">
    <text evidence="1">Catalyzes the transfer of the enolpyruvyl moiety of phosphoenolpyruvate (PEP) to the 5-hydroxyl of shikimate-3-phosphate (S3P) to produce enolpyruvyl shikimate-3-phosphate and inorganic phosphate.</text>
</comment>
<comment type="catalytic activity">
    <reaction evidence="1">
        <text>3-phosphoshikimate + phosphoenolpyruvate = 5-O-(1-carboxyvinyl)-3-phosphoshikimate + phosphate</text>
        <dbReference type="Rhea" id="RHEA:21256"/>
        <dbReference type="ChEBI" id="CHEBI:43474"/>
        <dbReference type="ChEBI" id="CHEBI:57701"/>
        <dbReference type="ChEBI" id="CHEBI:58702"/>
        <dbReference type="ChEBI" id="CHEBI:145989"/>
        <dbReference type="EC" id="2.5.1.19"/>
    </reaction>
    <physiologicalReaction direction="left-to-right" evidence="1">
        <dbReference type="Rhea" id="RHEA:21257"/>
    </physiologicalReaction>
</comment>
<comment type="pathway">
    <text evidence="1">Metabolic intermediate biosynthesis; chorismate biosynthesis; chorismate from D-erythrose 4-phosphate and phosphoenolpyruvate: step 6/7.</text>
</comment>
<comment type="subunit">
    <text evidence="1">Monomer.</text>
</comment>
<comment type="subcellular location">
    <subcellularLocation>
        <location evidence="1">Cytoplasm</location>
    </subcellularLocation>
</comment>
<comment type="similarity">
    <text evidence="1">Belongs to the EPSP synthase family.</text>
</comment>
<dbReference type="EC" id="2.5.1.19" evidence="1"/>
<dbReference type="EMBL" id="CP000266">
    <property type="protein sequence ID" value="ABF03130.1"/>
    <property type="molecule type" value="Genomic_DNA"/>
</dbReference>
<dbReference type="RefSeq" id="WP_000445222.1">
    <property type="nucleotide sequence ID" value="NC_008258.1"/>
</dbReference>
<dbReference type="SMR" id="Q0SX08"/>
<dbReference type="KEGG" id="sfv:SFV_0908"/>
<dbReference type="HOGENOM" id="CLU_024321_0_0_6"/>
<dbReference type="UniPathway" id="UPA00053">
    <property type="reaction ID" value="UER00089"/>
</dbReference>
<dbReference type="Proteomes" id="UP000000659">
    <property type="component" value="Chromosome"/>
</dbReference>
<dbReference type="GO" id="GO:0005737">
    <property type="term" value="C:cytoplasm"/>
    <property type="evidence" value="ECO:0007669"/>
    <property type="project" value="UniProtKB-SubCell"/>
</dbReference>
<dbReference type="GO" id="GO:0003866">
    <property type="term" value="F:3-phosphoshikimate 1-carboxyvinyltransferase activity"/>
    <property type="evidence" value="ECO:0007669"/>
    <property type="project" value="UniProtKB-UniRule"/>
</dbReference>
<dbReference type="GO" id="GO:0008652">
    <property type="term" value="P:amino acid biosynthetic process"/>
    <property type="evidence" value="ECO:0007669"/>
    <property type="project" value="UniProtKB-KW"/>
</dbReference>
<dbReference type="GO" id="GO:0009073">
    <property type="term" value="P:aromatic amino acid family biosynthetic process"/>
    <property type="evidence" value="ECO:0007669"/>
    <property type="project" value="UniProtKB-KW"/>
</dbReference>
<dbReference type="GO" id="GO:0009423">
    <property type="term" value="P:chorismate biosynthetic process"/>
    <property type="evidence" value="ECO:0007669"/>
    <property type="project" value="UniProtKB-UniRule"/>
</dbReference>
<dbReference type="CDD" id="cd01554">
    <property type="entry name" value="EPT-like"/>
    <property type="match status" value="1"/>
</dbReference>
<dbReference type="FunFam" id="3.65.10.10:FF:000003">
    <property type="entry name" value="3-phosphoshikimate 1-carboxyvinyltransferase"/>
    <property type="match status" value="1"/>
</dbReference>
<dbReference type="FunFam" id="3.65.10.10:FF:000004">
    <property type="entry name" value="3-phosphoshikimate 1-carboxyvinyltransferase"/>
    <property type="match status" value="1"/>
</dbReference>
<dbReference type="Gene3D" id="3.65.10.10">
    <property type="entry name" value="Enolpyruvate transferase domain"/>
    <property type="match status" value="2"/>
</dbReference>
<dbReference type="HAMAP" id="MF_00210">
    <property type="entry name" value="EPSP_synth"/>
    <property type="match status" value="1"/>
</dbReference>
<dbReference type="InterPro" id="IPR001986">
    <property type="entry name" value="Enolpyruvate_Tfrase_dom"/>
</dbReference>
<dbReference type="InterPro" id="IPR036968">
    <property type="entry name" value="Enolpyruvate_Tfrase_sf"/>
</dbReference>
<dbReference type="InterPro" id="IPR006264">
    <property type="entry name" value="EPSP_synthase"/>
</dbReference>
<dbReference type="InterPro" id="IPR023193">
    <property type="entry name" value="EPSP_synthase_CS"/>
</dbReference>
<dbReference type="InterPro" id="IPR013792">
    <property type="entry name" value="RNA3'P_cycl/enolpyr_Trfase_a/b"/>
</dbReference>
<dbReference type="NCBIfam" id="TIGR01356">
    <property type="entry name" value="aroA"/>
    <property type="match status" value="1"/>
</dbReference>
<dbReference type="PANTHER" id="PTHR21090">
    <property type="entry name" value="AROM/DEHYDROQUINATE SYNTHASE"/>
    <property type="match status" value="1"/>
</dbReference>
<dbReference type="PANTHER" id="PTHR21090:SF5">
    <property type="entry name" value="PENTAFUNCTIONAL AROM POLYPEPTIDE"/>
    <property type="match status" value="1"/>
</dbReference>
<dbReference type="Pfam" id="PF00275">
    <property type="entry name" value="EPSP_synthase"/>
    <property type="match status" value="1"/>
</dbReference>
<dbReference type="PIRSF" id="PIRSF000505">
    <property type="entry name" value="EPSPS"/>
    <property type="match status" value="1"/>
</dbReference>
<dbReference type="SUPFAM" id="SSF55205">
    <property type="entry name" value="EPT/RTPC-like"/>
    <property type="match status" value="1"/>
</dbReference>
<dbReference type="PROSITE" id="PS00104">
    <property type="entry name" value="EPSP_SYNTHASE_1"/>
    <property type="match status" value="1"/>
</dbReference>
<dbReference type="PROSITE" id="PS00885">
    <property type="entry name" value="EPSP_SYNTHASE_2"/>
    <property type="match status" value="1"/>
</dbReference>